<reference key="1">
    <citation type="journal article" date="2011" name="J. Bacteriol.">
        <title>Whole-genome sequences of thirteen isolates of Borrelia burgdorferi.</title>
        <authorList>
            <person name="Schutzer S.E."/>
            <person name="Fraser-Liggett C.M."/>
            <person name="Casjens S.R."/>
            <person name="Qiu W.G."/>
            <person name="Dunn J.J."/>
            <person name="Mongodin E.F."/>
            <person name="Luft B.J."/>
        </authorList>
    </citation>
    <scope>NUCLEOTIDE SEQUENCE [LARGE SCALE GENOMIC DNA]</scope>
    <source>
        <strain>ZS7</strain>
    </source>
</reference>
<accession>B7J0P5</accession>
<comment type="function">
    <text evidence="1">Required for maturation of 30S ribosomal subunits.</text>
</comment>
<comment type="subcellular location">
    <subcellularLocation>
        <location evidence="1">Cytoplasm</location>
    </subcellularLocation>
</comment>
<comment type="similarity">
    <text evidence="1">Belongs to the RimP family.</text>
</comment>
<protein>
    <recommendedName>
        <fullName evidence="1">Ribosome maturation factor RimP</fullName>
    </recommendedName>
</protein>
<proteinExistence type="inferred from homology"/>
<organism>
    <name type="scientific">Borreliella burgdorferi (strain ZS7)</name>
    <name type="common">Borrelia burgdorferi</name>
    <dbReference type="NCBI Taxonomy" id="445985"/>
    <lineage>
        <taxon>Bacteria</taxon>
        <taxon>Pseudomonadati</taxon>
        <taxon>Spirochaetota</taxon>
        <taxon>Spirochaetia</taxon>
        <taxon>Spirochaetales</taxon>
        <taxon>Borreliaceae</taxon>
        <taxon>Borreliella</taxon>
    </lineage>
</organism>
<evidence type="ECO:0000255" key="1">
    <source>
        <dbReference type="HAMAP-Rule" id="MF_01077"/>
    </source>
</evidence>
<keyword id="KW-0963">Cytoplasm</keyword>
<keyword id="KW-0690">Ribosome biogenesis</keyword>
<sequence length="145" mass="17061">MIKYFDKNNEVFNLIKDLTGRLNVEILEINIFRNKNNGKIQIVLYSKNFSLDIDFLTDLHKIILLILEANLKYGFTLELSTPGIDRKIKSDREFKIFEGKKIKLMLDNEFEEGFILESKPKSFIFKTDSKEVNVFYSDVKKARLV</sequence>
<feature type="chain" id="PRO_1000136735" description="Ribosome maturation factor RimP">
    <location>
        <begin position="1"/>
        <end position="145"/>
    </location>
</feature>
<gene>
    <name evidence="1" type="primary">rimP</name>
    <name type="ordered locus">BbuZS7_0829</name>
</gene>
<dbReference type="EMBL" id="CP001205">
    <property type="protein sequence ID" value="ACK74919.1"/>
    <property type="molecule type" value="Genomic_DNA"/>
</dbReference>
<dbReference type="RefSeq" id="WP_002657059.1">
    <property type="nucleotide sequence ID" value="NC_011728.1"/>
</dbReference>
<dbReference type="SMR" id="B7J0P5"/>
<dbReference type="GeneID" id="56567378"/>
<dbReference type="KEGG" id="bbz:BbuZS7_0829"/>
<dbReference type="HOGENOM" id="CLU_070525_4_1_12"/>
<dbReference type="Proteomes" id="UP000006901">
    <property type="component" value="Chromosome"/>
</dbReference>
<dbReference type="GO" id="GO:0005829">
    <property type="term" value="C:cytosol"/>
    <property type="evidence" value="ECO:0007669"/>
    <property type="project" value="TreeGrafter"/>
</dbReference>
<dbReference type="GO" id="GO:0000028">
    <property type="term" value="P:ribosomal small subunit assembly"/>
    <property type="evidence" value="ECO:0007669"/>
    <property type="project" value="TreeGrafter"/>
</dbReference>
<dbReference type="GO" id="GO:0006412">
    <property type="term" value="P:translation"/>
    <property type="evidence" value="ECO:0007669"/>
    <property type="project" value="TreeGrafter"/>
</dbReference>
<dbReference type="HAMAP" id="MF_01077">
    <property type="entry name" value="RimP"/>
    <property type="match status" value="1"/>
</dbReference>
<dbReference type="InterPro" id="IPR003728">
    <property type="entry name" value="Ribosome_maturation_RimP"/>
</dbReference>
<dbReference type="InterPro" id="IPR028989">
    <property type="entry name" value="RimP_N"/>
</dbReference>
<dbReference type="InterPro" id="IPR035956">
    <property type="entry name" value="RimP_N_sf"/>
</dbReference>
<dbReference type="NCBIfam" id="NF011223">
    <property type="entry name" value="PRK14630.1"/>
    <property type="match status" value="1"/>
</dbReference>
<dbReference type="PANTHER" id="PTHR33867">
    <property type="entry name" value="RIBOSOME MATURATION FACTOR RIMP"/>
    <property type="match status" value="1"/>
</dbReference>
<dbReference type="PANTHER" id="PTHR33867:SF1">
    <property type="entry name" value="RIBOSOME MATURATION FACTOR RIMP"/>
    <property type="match status" value="1"/>
</dbReference>
<dbReference type="Pfam" id="PF02576">
    <property type="entry name" value="RimP_N"/>
    <property type="match status" value="1"/>
</dbReference>
<dbReference type="SUPFAM" id="SSF75420">
    <property type="entry name" value="YhbC-like, N-terminal domain"/>
    <property type="match status" value="1"/>
</dbReference>
<name>RIMP_BORBZ</name>